<keyword id="KW-0066">ATP synthesis</keyword>
<keyword id="KW-0138">CF(0)</keyword>
<keyword id="KW-0375">Hydrogen ion transport</keyword>
<keyword id="KW-0406">Ion transport</keyword>
<keyword id="KW-0446">Lipid-binding</keyword>
<keyword id="KW-0472">Membrane</keyword>
<keyword id="KW-0793">Thylakoid</keyword>
<keyword id="KW-0812">Transmembrane</keyword>
<keyword id="KW-1133">Transmembrane helix</keyword>
<keyword id="KW-0813">Transport</keyword>
<gene>
    <name evidence="1" type="primary">atpE</name>
    <name evidence="1" type="synonym">atpH</name>
</gene>
<protein>
    <recommendedName>
        <fullName evidence="1">ATP synthase subunit c</fullName>
    </recommendedName>
    <alternativeName>
        <fullName evidence="1">ATP synthase F(0) sector subunit c</fullName>
    </alternativeName>
    <alternativeName>
        <fullName evidence="1">F-type ATPase subunit c</fullName>
        <shortName evidence="1">F-ATPase subunit c</shortName>
    </alternativeName>
    <alternativeName>
        <fullName evidence="1">Lipid-binding protein</fullName>
    </alternativeName>
</protein>
<proteinExistence type="inferred from homology"/>
<organism>
    <name type="scientific">Synechococcus sp. (strain PCC 6716)</name>
    <dbReference type="NCBI Taxonomy" id="32048"/>
    <lineage>
        <taxon>Bacteria</taxon>
        <taxon>Bacillati</taxon>
        <taxon>Cyanobacteriota</taxon>
        <taxon>Cyanophyceae</taxon>
        <taxon>Synechococcales</taxon>
        <taxon>Synechococcaceae</taxon>
        <taxon>Synechococcus</taxon>
    </lineage>
</organism>
<dbReference type="EMBL" id="X70431">
    <property type="protein sequence ID" value="CAA49871.1"/>
    <property type="molecule type" value="Genomic_DNA"/>
</dbReference>
<dbReference type="SMR" id="Q05366"/>
<dbReference type="GO" id="GO:0031676">
    <property type="term" value="C:plasma membrane-derived thylakoid membrane"/>
    <property type="evidence" value="ECO:0007669"/>
    <property type="project" value="UniProtKB-SubCell"/>
</dbReference>
<dbReference type="GO" id="GO:0045259">
    <property type="term" value="C:proton-transporting ATP synthase complex"/>
    <property type="evidence" value="ECO:0007669"/>
    <property type="project" value="UniProtKB-KW"/>
</dbReference>
<dbReference type="GO" id="GO:0033177">
    <property type="term" value="C:proton-transporting two-sector ATPase complex, proton-transporting domain"/>
    <property type="evidence" value="ECO:0007669"/>
    <property type="project" value="InterPro"/>
</dbReference>
<dbReference type="GO" id="GO:0008289">
    <property type="term" value="F:lipid binding"/>
    <property type="evidence" value="ECO:0007669"/>
    <property type="project" value="UniProtKB-KW"/>
</dbReference>
<dbReference type="GO" id="GO:0046933">
    <property type="term" value="F:proton-transporting ATP synthase activity, rotational mechanism"/>
    <property type="evidence" value="ECO:0007669"/>
    <property type="project" value="UniProtKB-UniRule"/>
</dbReference>
<dbReference type="CDD" id="cd18183">
    <property type="entry name" value="ATP-synt_Fo_c_ATPH"/>
    <property type="match status" value="1"/>
</dbReference>
<dbReference type="FunFam" id="1.20.20.10:FF:000001">
    <property type="entry name" value="ATP synthase subunit c, chloroplastic"/>
    <property type="match status" value="1"/>
</dbReference>
<dbReference type="Gene3D" id="1.20.20.10">
    <property type="entry name" value="F1F0 ATP synthase subunit C"/>
    <property type="match status" value="1"/>
</dbReference>
<dbReference type="HAMAP" id="MF_01396">
    <property type="entry name" value="ATP_synth_c_bact"/>
    <property type="match status" value="1"/>
</dbReference>
<dbReference type="InterPro" id="IPR005953">
    <property type="entry name" value="ATP_synth_csu_bac/chlpt"/>
</dbReference>
<dbReference type="InterPro" id="IPR000454">
    <property type="entry name" value="ATP_synth_F0_csu"/>
</dbReference>
<dbReference type="InterPro" id="IPR020537">
    <property type="entry name" value="ATP_synth_F0_csu_DDCD_BS"/>
</dbReference>
<dbReference type="InterPro" id="IPR038662">
    <property type="entry name" value="ATP_synth_F0_csu_sf"/>
</dbReference>
<dbReference type="InterPro" id="IPR002379">
    <property type="entry name" value="ATPase_proteolipid_c-like_dom"/>
</dbReference>
<dbReference type="InterPro" id="IPR035921">
    <property type="entry name" value="F/V-ATP_Csub_sf"/>
</dbReference>
<dbReference type="NCBIfam" id="TIGR01260">
    <property type="entry name" value="ATP_synt_c"/>
    <property type="match status" value="1"/>
</dbReference>
<dbReference type="NCBIfam" id="NF005608">
    <property type="entry name" value="PRK07354.1"/>
    <property type="match status" value="1"/>
</dbReference>
<dbReference type="PANTHER" id="PTHR10031">
    <property type="entry name" value="ATP SYNTHASE LIPID-BINDING PROTEIN, MITOCHONDRIAL"/>
    <property type="match status" value="1"/>
</dbReference>
<dbReference type="PANTHER" id="PTHR10031:SF0">
    <property type="entry name" value="ATPASE PROTEIN 9"/>
    <property type="match status" value="1"/>
</dbReference>
<dbReference type="Pfam" id="PF00137">
    <property type="entry name" value="ATP-synt_C"/>
    <property type="match status" value="1"/>
</dbReference>
<dbReference type="PRINTS" id="PR00124">
    <property type="entry name" value="ATPASEC"/>
</dbReference>
<dbReference type="SUPFAM" id="SSF81333">
    <property type="entry name" value="F1F0 ATP synthase subunit C"/>
    <property type="match status" value="1"/>
</dbReference>
<dbReference type="PROSITE" id="PS00605">
    <property type="entry name" value="ATPASE_C"/>
    <property type="match status" value="1"/>
</dbReference>
<feature type="chain" id="PRO_0000112171" description="ATP synthase subunit c">
    <location>
        <begin position="1"/>
        <end position="82"/>
    </location>
</feature>
<feature type="transmembrane region" description="Helical" evidence="1">
    <location>
        <begin position="3"/>
        <end position="23"/>
    </location>
</feature>
<feature type="transmembrane region" description="Helical" evidence="1">
    <location>
        <begin position="57"/>
        <end position="77"/>
    </location>
</feature>
<feature type="site" description="Reversibly protonated during proton transport" evidence="1">
    <location>
        <position position="61"/>
    </location>
</feature>
<reference key="1">
    <citation type="journal article" date="1993" name="Biochem. J.">
        <title>Organization and sequences of genes for the subunits of ATP synthase in the thermophilic cyanobacterium Synechococcus 6716.</title>
        <authorList>
            <person name="van Walraven H.S."/>
            <person name="Lutter R."/>
            <person name="Walker J.E."/>
        </authorList>
    </citation>
    <scope>NUCLEOTIDE SEQUENCE [GENOMIC DNA]</scope>
</reference>
<comment type="function">
    <text evidence="1">F(1)F(0) ATP synthase produces ATP from ADP in the presence of a proton or sodium gradient. F-type ATPases consist of two structural domains, F(1) containing the extramembraneous catalytic core and F(0) containing the membrane proton channel, linked together by a central stalk and a peripheral stalk. During catalysis, ATP synthesis in the catalytic domain of F(1) is coupled via a rotary mechanism of the central stalk subunits to proton translocation.</text>
</comment>
<comment type="function">
    <text evidence="1">Key component of the F(0) channel; it plays a direct role in translocation across the membrane. A homomeric c-ring of between 10-14 subunits forms the central stalk rotor element with the F(1) delta and epsilon subunits.</text>
</comment>
<comment type="subunit">
    <text evidence="1">F-type ATPases have 2 components, F(1) - the catalytic core - and F(0) - the membrane proton channel. F(1) has five subunits: alpha(3), beta(3), gamma(1), delta(1), epsilon(1). F(0) has four main subunits: a(1), b(1), b'(1) and c(10-14). The alpha and beta chains form an alternating ring which encloses part of the gamma chain. F(1) is attached to F(0) by a central stalk formed by the gamma and epsilon chains, while a peripheral stalk is formed by the delta, b and b' chains.</text>
</comment>
<comment type="subcellular location">
    <subcellularLocation>
        <location evidence="1">Cellular thylakoid membrane</location>
        <topology evidence="1">Multi-pass membrane protein</topology>
    </subcellularLocation>
</comment>
<comment type="similarity">
    <text evidence="1">Belongs to the ATPase C chain family.</text>
</comment>
<evidence type="ECO:0000255" key="1">
    <source>
        <dbReference type="HAMAP-Rule" id="MF_01396"/>
    </source>
</evidence>
<name>ATPL_SYNP1</name>
<accession>Q05366</accession>
<sequence length="82" mass="8180">MDPLVASASVLAAALAIGLASLGPGIGQGNASGQAVEGIARQPEAEGKIRGTLLLTLAFMESLTIYGLVIALVLLFANPFAS</sequence>